<accession>Q9PEE7</accession>
<reference key="1">
    <citation type="journal article" date="2000" name="Nature">
        <title>The genome sequence of the plant pathogen Xylella fastidiosa.</title>
        <authorList>
            <person name="Simpson A.J.G."/>
            <person name="Reinach F.C."/>
            <person name="Arruda P."/>
            <person name="Abreu F.A."/>
            <person name="Acencio M."/>
            <person name="Alvarenga R."/>
            <person name="Alves L.M.C."/>
            <person name="Araya J.E."/>
            <person name="Baia G.S."/>
            <person name="Baptista C.S."/>
            <person name="Barros M.H."/>
            <person name="Bonaccorsi E.D."/>
            <person name="Bordin S."/>
            <person name="Bove J.M."/>
            <person name="Briones M.R.S."/>
            <person name="Bueno M.R.P."/>
            <person name="Camargo A.A."/>
            <person name="Camargo L.E.A."/>
            <person name="Carraro D.M."/>
            <person name="Carrer H."/>
            <person name="Colauto N.B."/>
            <person name="Colombo C."/>
            <person name="Costa F.F."/>
            <person name="Costa M.C.R."/>
            <person name="Costa-Neto C.M."/>
            <person name="Coutinho L.L."/>
            <person name="Cristofani M."/>
            <person name="Dias-Neto E."/>
            <person name="Docena C."/>
            <person name="El-Dorry H."/>
            <person name="Facincani A.P."/>
            <person name="Ferreira A.J.S."/>
            <person name="Ferreira V.C.A."/>
            <person name="Ferro J.A."/>
            <person name="Fraga J.S."/>
            <person name="Franca S.C."/>
            <person name="Franco M.C."/>
            <person name="Frohme M."/>
            <person name="Furlan L.R."/>
            <person name="Garnier M."/>
            <person name="Goldman G.H."/>
            <person name="Goldman M.H.S."/>
            <person name="Gomes S.L."/>
            <person name="Gruber A."/>
            <person name="Ho P.L."/>
            <person name="Hoheisel J.D."/>
            <person name="Junqueira M.L."/>
            <person name="Kemper E.L."/>
            <person name="Kitajima J.P."/>
            <person name="Krieger J.E."/>
            <person name="Kuramae E.E."/>
            <person name="Laigret F."/>
            <person name="Lambais M.R."/>
            <person name="Leite L.C.C."/>
            <person name="Lemos E.G.M."/>
            <person name="Lemos M.V.F."/>
            <person name="Lopes S.A."/>
            <person name="Lopes C.R."/>
            <person name="Machado J.A."/>
            <person name="Machado M.A."/>
            <person name="Madeira A.M.B.N."/>
            <person name="Madeira H.M.F."/>
            <person name="Marino C.L."/>
            <person name="Marques M.V."/>
            <person name="Martins E.A.L."/>
            <person name="Martins E.M.F."/>
            <person name="Matsukuma A.Y."/>
            <person name="Menck C.F.M."/>
            <person name="Miracca E.C."/>
            <person name="Miyaki C.Y."/>
            <person name="Monteiro-Vitorello C.B."/>
            <person name="Moon D.H."/>
            <person name="Nagai M.A."/>
            <person name="Nascimento A.L.T.O."/>
            <person name="Netto L.E.S."/>
            <person name="Nhani A. Jr."/>
            <person name="Nobrega F.G."/>
            <person name="Nunes L.R."/>
            <person name="Oliveira M.A."/>
            <person name="de Oliveira M.C."/>
            <person name="de Oliveira R.C."/>
            <person name="Palmieri D.A."/>
            <person name="Paris A."/>
            <person name="Peixoto B.R."/>
            <person name="Pereira G.A.G."/>
            <person name="Pereira H.A. Jr."/>
            <person name="Pesquero J.B."/>
            <person name="Quaggio R.B."/>
            <person name="Roberto P.G."/>
            <person name="Rodrigues V."/>
            <person name="de Rosa A.J.M."/>
            <person name="de Rosa V.E. Jr."/>
            <person name="de Sa R.G."/>
            <person name="Santelli R.V."/>
            <person name="Sawasaki H.E."/>
            <person name="da Silva A.C.R."/>
            <person name="da Silva A.M."/>
            <person name="da Silva F.R."/>
            <person name="Silva W.A. Jr."/>
            <person name="da Silveira J.F."/>
            <person name="Silvestri M.L.Z."/>
            <person name="Siqueira W.J."/>
            <person name="de Souza A.A."/>
            <person name="de Souza A.P."/>
            <person name="Terenzi M.F."/>
            <person name="Truffi D."/>
            <person name="Tsai S.M."/>
            <person name="Tsuhako M.H."/>
            <person name="Vallada H."/>
            <person name="Van Sluys M.A."/>
            <person name="Verjovski-Almeida S."/>
            <person name="Vettore A.L."/>
            <person name="Zago M.A."/>
            <person name="Zatz M."/>
            <person name="Meidanis J."/>
            <person name="Setubal J.C."/>
        </authorList>
    </citation>
    <scope>NUCLEOTIDE SEQUENCE [LARGE SCALE GENOMIC DNA]</scope>
    <source>
        <strain>9a5c</strain>
    </source>
</reference>
<organism>
    <name type="scientific">Xylella fastidiosa (strain 9a5c)</name>
    <dbReference type="NCBI Taxonomy" id="160492"/>
    <lineage>
        <taxon>Bacteria</taxon>
        <taxon>Pseudomonadati</taxon>
        <taxon>Pseudomonadota</taxon>
        <taxon>Gammaproteobacteria</taxon>
        <taxon>Lysobacterales</taxon>
        <taxon>Lysobacteraceae</taxon>
        <taxon>Xylella</taxon>
    </lineage>
</organism>
<evidence type="ECO:0000255" key="1">
    <source>
        <dbReference type="HAMAP-Rule" id="MF_01703"/>
    </source>
</evidence>
<dbReference type="EC" id="7.5.2.6" evidence="1"/>
<dbReference type="EMBL" id="AE003849">
    <property type="protein sequence ID" value="AAF83891.1"/>
    <property type="molecule type" value="Genomic_DNA"/>
</dbReference>
<dbReference type="PIR" id="F82726">
    <property type="entry name" value="F82726"/>
</dbReference>
<dbReference type="SMR" id="Q9PEE7"/>
<dbReference type="STRING" id="160492.XF_1081"/>
<dbReference type="KEGG" id="xfa:XF_1081"/>
<dbReference type="eggNOG" id="COG1132">
    <property type="taxonomic scope" value="Bacteria"/>
</dbReference>
<dbReference type="HOGENOM" id="CLU_000604_84_3_6"/>
<dbReference type="Proteomes" id="UP000000812">
    <property type="component" value="Chromosome"/>
</dbReference>
<dbReference type="GO" id="GO:0005886">
    <property type="term" value="C:plasma membrane"/>
    <property type="evidence" value="ECO:0007669"/>
    <property type="project" value="UniProtKB-SubCell"/>
</dbReference>
<dbReference type="GO" id="GO:0015421">
    <property type="term" value="F:ABC-type oligopeptide transporter activity"/>
    <property type="evidence" value="ECO:0007669"/>
    <property type="project" value="TreeGrafter"/>
</dbReference>
<dbReference type="GO" id="GO:0005524">
    <property type="term" value="F:ATP binding"/>
    <property type="evidence" value="ECO:0007669"/>
    <property type="project" value="UniProtKB-KW"/>
</dbReference>
<dbReference type="GO" id="GO:0016887">
    <property type="term" value="F:ATP hydrolysis activity"/>
    <property type="evidence" value="ECO:0007669"/>
    <property type="project" value="InterPro"/>
</dbReference>
<dbReference type="GO" id="GO:0034040">
    <property type="term" value="F:ATPase-coupled lipid transmembrane transporter activity"/>
    <property type="evidence" value="ECO:0007669"/>
    <property type="project" value="InterPro"/>
</dbReference>
<dbReference type="CDD" id="cd18552">
    <property type="entry name" value="ABC_6TM_MsbA_like"/>
    <property type="match status" value="1"/>
</dbReference>
<dbReference type="FunFam" id="3.40.50.300:FF:000140">
    <property type="entry name" value="Lipid A export ATP-binding/permease protein MsbA"/>
    <property type="match status" value="1"/>
</dbReference>
<dbReference type="Gene3D" id="1.20.1560.10">
    <property type="entry name" value="ABC transporter type 1, transmembrane domain"/>
    <property type="match status" value="1"/>
</dbReference>
<dbReference type="Gene3D" id="3.40.50.300">
    <property type="entry name" value="P-loop containing nucleotide triphosphate hydrolases"/>
    <property type="match status" value="1"/>
</dbReference>
<dbReference type="InterPro" id="IPR003593">
    <property type="entry name" value="AAA+_ATPase"/>
</dbReference>
<dbReference type="InterPro" id="IPR011527">
    <property type="entry name" value="ABC1_TM_dom"/>
</dbReference>
<dbReference type="InterPro" id="IPR036640">
    <property type="entry name" value="ABC1_TM_sf"/>
</dbReference>
<dbReference type="InterPro" id="IPR003439">
    <property type="entry name" value="ABC_transporter-like_ATP-bd"/>
</dbReference>
<dbReference type="InterPro" id="IPR017871">
    <property type="entry name" value="ABC_transporter-like_CS"/>
</dbReference>
<dbReference type="InterPro" id="IPR011917">
    <property type="entry name" value="ABC_transpr_lipidA"/>
</dbReference>
<dbReference type="InterPro" id="IPR027417">
    <property type="entry name" value="P-loop_NTPase"/>
</dbReference>
<dbReference type="InterPro" id="IPR039421">
    <property type="entry name" value="Type_1_exporter"/>
</dbReference>
<dbReference type="NCBIfam" id="TIGR02203">
    <property type="entry name" value="MsbA_lipidA"/>
    <property type="match status" value="1"/>
</dbReference>
<dbReference type="PANTHER" id="PTHR43394:SF1">
    <property type="entry name" value="ATP-BINDING CASSETTE SUB-FAMILY B MEMBER 10, MITOCHONDRIAL"/>
    <property type="match status" value="1"/>
</dbReference>
<dbReference type="PANTHER" id="PTHR43394">
    <property type="entry name" value="ATP-DEPENDENT PERMEASE MDL1, MITOCHONDRIAL"/>
    <property type="match status" value="1"/>
</dbReference>
<dbReference type="Pfam" id="PF00664">
    <property type="entry name" value="ABC_membrane"/>
    <property type="match status" value="1"/>
</dbReference>
<dbReference type="Pfam" id="PF00005">
    <property type="entry name" value="ABC_tran"/>
    <property type="match status" value="1"/>
</dbReference>
<dbReference type="SMART" id="SM00382">
    <property type="entry name" value="AAA"/>
    <property type="match status" value="1"/>
</dbReference>
<dbReference type="SUPFAM" id="SSF90123">
    <property type="entry name" value="ABC transporter transmembrane region"/>
    <property type="match status" value="1"/>
</dbReference>
<dbReference type="SUPFAM" id="SSF52540">
    <property type="entry name" value="P-loop containing nucleoside triphosphate hydrolases"/>
    <property type="match status" value="1"/>
</dbReference>
<dbReference type="PROSITE" id="PS50929">
    <property type="entry name" value="ABC_TM1F"/>
    <property type="match status" value="1"/>
</dbReference>
<dbReference type="PROSITE" id="PS00211">
    <property type="entry name" value="ABC_TRANSPORTER_1"/>
    <property type="match status" value="1"/>
</dbReference>
<dbReference type="PROSITE" id="PS50893">
    <property type="entry name" value="ABC_TRANSPORTER_2"/>
    <property type="match status" value="1"/>
</dbReference>
<dbReference type="PROSITE" id="PS51239">
    <property type="entry name" value="MSBA"/>
    <property type="match status" value="1"/>
</dbReference>
<feature type="chain" id="PRO_0000092608" description="ATP-dependent lipid A-core flippase">
    <location>
        <begin position="1"/>
        <end position="589"/>
    </location>
</feature>
<feature type="transmembrane region" description="Helical" evidence="1">
    <location>
        <begin position="29"/>
        <end position="49"/>
    </location>
</feature>
<feature type="transmembrane region" description="Helical" evidence="1">
    <location>
        <begin position="68"/>
        <end position="88"/>
    </location>
</feature>
<feature type="transmembrane region" description="Helical" evidence="1">
    <location>
        <begin position="157"/>
        <end position="177"/>
    </location>
</feature>
<feature type="transmembrane region" description="Helical" evidence="1">
    <location>
        <begin position="254"/>
        <end position="274"/>
    </location>
</feature>
<feature type="transmembrane region" description="Helical" evidence="1">
    <location>
        <begin position="283"/>
        <end position="303"/>
    </location>
</feature>
<feature type="domain" description="ABC transmembrane type-1" evidence="1">
    <location>
        <begin position="32"/>
        <end position="314"/>
    </location>
</feature>
<feature type="domain" description="ABC transporter" evidence="1">
    <location>
        <begin position="346"/>
        <end position="582"/>
    </location>
</feature>
<feature type="binding site" evidence="1">
    <location>
        <begin position="380"/>
        <end position="387"/>
    </location>
    <ligand>
        <name>ATP</name>
        <dbReference type="ChEBI" id="CHEBI:30616"/>
    </ligand>
</feature>
<keyword id="KW-0067">ATP-binding</keyword>
<keyword id="KW-0997">Cell inner membrane</keyword>
<keyword id="KW-1003">Cell membrane</keyword>
<keyword id="KW-0445">Lipid transport</keyword>
<keyword id="KW-0472">Membrane</keyword>
<keyword id="KW-0547">Nucleotide-binding</keyword>
<keyword id="KW-1278">Translocase</keyword>
<keyword id="KW-0812">Transmembrane</keyword>
<keyword id="KW-1133">Transmembrane helix</keyword>
<keyword id="KW-0813">Transport</keyword>
<protein>
    <recommendedName>
        <fullName evidence="1">ATP-dependent lipid A-core flippase</fullName>
        <ecNumber evidence="1">7.5.2.6</ecNumber>
    </recommendedName>
    <alternativeName>
        <fullName evidence="1">Lipid A export ATP-binding/permease protein MsbA</fullName>
    </alternativeName>
</protein>
<proteinExistence type="inferred from homology"/>
<name>MSBA_XYLFA</name>
<sequence>MNVLSGAMRYATPWRTYRRLLSYAREYRWLLVVAACGALLEAVAGSTFLALMKPITNETFIERNREVALWLPLGIVGLFLLRGIAGYITDMAMGRAARSIARDFRVCVLTKYFRLPGSRFDGEPVASMLVRLGSDSEQVAHAVIDAMKVMVQQTLQVIGALVVMLWYSWTVTLAILLVAPLLAWVMQRVAKRYRRISHHIQESNAQLMQAADQALSNYQDVKVYAAQESELERYARLANINLGLAIKVESTRSLSSAAVQLLGAVGLAMLLLIAGHEALAGRLSPGDFVSLMTSMIAVIPALKQLTNVQNMLQSGIASAQRLFSVLDSPDELDTGRRPLGRARGFIEFRGITARYPGRSAPVLDSVSFVAAPGTVTAIVGRSGSGKSSLIKLIPRFYEPESGQILLDGHPLQDYLLADLRRQIALVGQQVMLFDGSIAENIAYGEMRQVVSEEIERVVVDANAQDFVNQLPEGLQFQVGVKGGRLSGGQRQRLAIARAMLKDAPILILDEATAALDNESERLVQDALQRLMPERTTLVIAHRLSTIKHADQVLVMDQGRIIESGTHVDLLARDGLYAYLYSMQFRERPT</sequence>
<gene>
    <name evidence="1" type="primary">msbA</name>
    <name type="ordered locus">XF_1081</name>
</gene>
<comment type="function">
    <text evidence="1">Involved in lipopolysaccharide (LPS) biosynthesis. Translocates lipid A-core from the inner to the outer leaflet of the inner membrane. Transmembrane domains (TMD) form a pore in the inner membrane and the ATP-binding domain (NBD) is responsible for energy generation.</text>
</comment>
<comment type="catalytic activity">
    <reaction evidence="1">
        <text>ATP + H2O + lipid A-core oligosaccharideSide 1 = ADP + phosphate + lipid A-core oligosaccharideSide 2.</text>
        <dbReference type="EC" id="7.5.2.6"/>
    </reaction>
</comment>
<comment type="subunit">
    <text evidence="1">Homodimer.</text>
</comment>
<comment type="subcellular location">
    <subcellularLocation>
        <location evidence="1">Cell inner membrane</location>
        <topology evidence="1">Multi-pass membrane protein</topology>
    </subcellularLocation>
</comment>
<comment type="domain">
    <text evidence="1">In MsbA the ATP-binding domain (NBD) and the transmembrane domain (TMD) are fused.</text>
</comment>
<comment type="similarity">
    <text evidence="1">Belongs to the ABC transporter superfamily. Lipid exporter (TC 3.A.1.106) family.</text>
</comment>